<comment type="function">
    <text evidence="1">DNA ligase that catalyzes the formation of phosphodiester linkages between 5'-phosphoryl and 3'-hydroxyl groups in double-stranded DNA using NAD as a coenzyme and as the energy source for the reaction. It is essential for DNA replication and repair of damaged DNA.</text>
</comment>
<comment type="catalytic activity">
    <reaction evidence="1">
        <text>NAD(+) + (deoxyribonucleotide)n-3'-hydroxyl + 5'-phospho-(deoxyribonucleotide)m = (deoxyribonucleotide)n+m + AMP + beta-nicotinamide D-nucleotide.</text>
        <dbReference type="EC" id="6.5.1.2"/>
    </reaction>
</comment>
<comment type="cofactor">
    <cofactor evidence="1">
        <name>Mg(2+)</name>
        <dbReference type="ChEBI" id="CHEBI:18420"/>
    </cofactor>
    <cofactor evidence="1">
        <name>Mn(2+)</name>
        <dbReference type="ChEBI" id="CHEBI:29035"/>
    </cofactor>
</comment>
<comment type="similarity">
    <text evidence="1">Belongs to the NAD-dependent DNA ligase family. LigA subfamily.</text>
</comment>
<reference key="1">
    <citation type="submission" date="2008-05" db="EMBL/GenBank/DDBJ databases">
        <title>Complete sequence of chromosome 1 of Ralstonia pickettii 12J.</title>
        <authorList>
            <person name="Lucas S."/>
            <person name="Copeland A."/>
            <person name="Lapidus A."/>
            <person name="Glavina del Rio T."/>
            <person name="Dalin E."/>
            <person name="Tice H."/>
            <person name="Bruce D."/>
            <person name="Goodwin L."/>
            <person name="Pitluck S."/>
            <person name="Meincke L."/>
            <person name="Brettin T."/>
            <person name="Detter J.C."/>
            <person name="Han C."/>
            <person name="Kuske C.R."/>
            <person name="Schmutz J."/>
            <person name="Larimer F."/>
            <person name="Land M."/>
            <person name="Hauser L."/>
            <person name="Kyrpides N."/>
            <person name="Mikhailova N."/>
            <person name="Marsh T."/>
            <person name="Richardson P."/>
        </authorList>
    </citation>
    <scope>NUCLEOTIDE SEQUENCE [LARGE SCALE GENOMIC DNA]</scope>
    <source>
        <strain>12J</strain>
    </source>
</reference>
<gene>
    <name evidence="1" type="primary">ligA</name>
    <name type="ordered locus">Rpic_1272</name>
</gene>
<keyword id="KW-0227">DNA damage</keyword>
<keyword id="KW-0234">DNA repair</keyword>
<keyword id="KW-0235">DNA replication</keyword>
<keyword id="KW-0436">Ligase</keyword>
<keyword id="KW-0460">Magnesium</keyword>
<keyword id="KW-0464">Manganese</keyword>
<keyword id="KW-0479">Metal-binding</keyword>
<keyword id="KW-0520">NAD</keyword>
<keyword id="KW-0862">Zinc</keyword>
<proteinExistence type="inferred from homology"/>
<accession>B2UB00</accession>
<sequence>MSKTEEPASGPPSKDRPEARAAWLRAELNRYAHEYYVLDQPSVPDVEYDRLYRELEALETEHPELKTPDSPTLRVGGAVLPEFAAVRHVIPMLSIRTETDTTANGARAFDASVRRELGLDDTDPPVEYAAELKFDGLAINLRYERGYLVQAATRGDGTTGEDVTQNIRTIRQIPLGLSPVDGHVPDVLEVRGEVYMRRDDFEKLNARQRERGDKTFVNPRNTAAGAVRQLDPKMAAERPLSFFAYGLGEVAGWKGMPGTHSSMLDVLQAFGFPVSNERAAVAGGEGLVRFHEAIRAKRDSLPFDIDGVVYKVNSLALQRELGFRSREPRWAVAHKYPAQEALTTVESIDVQVGRTGAITPVARLVPVFVGGVTVTNATLHNEDEVRRKDVRVGDTVIVRRAGDVIPEVVSVVLDRRPLDDVPGSDLFNPQQQPKYPPFELPKTCPVCGSHVVREEGEAVARCSGGLFCSAQRKEAIRHFAGRRMMDIEGLGERYIDNLVELDYVHGIADLYKLTLEDFLEMKRRADERDGVTPETVSAGKIATKWAENLLEGIQASKTPPLARFLFALGIRHVGESTAKTLADWLGSLAMIRRAPAPLLLALPDVGATVAEAIADFFAEPKNQQALDALLEAGVAPQGEHAPNAKLREKLEPAELYATLGVPKLTATRAKQLAVAAPTLAQLASVEPDQLAGLPADVTASLLEWLASHDHRAQLAKLDALRGELLAAMPAEAAEEGVLDGKTVVLTGTLPNLTRDEAKAMLEAAGAKVSGSVSKKTDYVVAGEDAGSKLAKAEELNVKVLDEAGMLALLKKPAGDQA</sequence>
<protein>
    <recommendedName>
        <fullName evidence="1">DNA ligase</fullName>
        <ecNumber evidence="1">6.5.1.2</ecNumber>
    </recommendedName>
    <alternativeName>
        <fullName evidence="1">Polydeoxyribonucleotide synthase [NAD(+)]</fullName>
    </alternativeName>
</protein>
<organism>
    <name type="scientific">Ralstonia pickettii (strain 12J)</name>
    <dbReference type="NCBI Taxonomy" id="402626"/>
    <lineage>
        <taxon>Bacteria</taxon>
        <taxon>Pseudomonadati</taxon>
        <taxon>Pseudomonadota</taxon>
        <taxon>Betaproteobacteria</taxon>
        <taxon>Burkholderiales</taxon>
        <taxon>Burkholderiaceae</taxon>
        <taxon>Ralstonia</taxon>
    </lineage>
</organism>
<dbReference type="EC" id="6.5.1.2" evidence="1"/>
<dbReference type="EMBL" id="CP001068">
    <property type="protein sequence ID" value="ACD26416.1"/>
    <property type="molecule type" value="Genomic_DNA"/>
</dbReference>
<dbReference type="SMR" id="B2UB00"/>
<dbReference type="STRING" id="402626.Rpic_1272"/>
<dbReference type="KEGG" id="rpi:Rpic_1272"/>
<dbReference type="PATRIC" id="fig|402626.5.peg.2476"/>
<dbReference type="eggNOG" id="COG0272">
    <property type="taxonomic scope" value="Bacteria"/>
</dbReference>
<dbReference type="HOGENOM" id="CLU_007764_2_1_4"/>
<dbReference type="GO" id="GO:0005829">
    <property type="term" value="C:cytosol"/>
    <property type="evidence" value="ECO:0007669"/>
    <property type="project" value="TreeGrafter"/>
</dbReference>
<dbReference type="GO" id="GO:0003677">
    <property type="term" value="F:DNA binding"/>
    <property type="evidence" value="ECO:0007669"/>
    <property type="project" value="InterPro"/>
</dbReference>
<dbReference type="GO" id="GO:0003911">
    <property type="term" value="F:DNA ligase (NAD+) activity"/>
    <property type="evidence" value="ECO:0007669"/>
    <property type="project" value="UniProtKB-UniRule"/>
</dbReference>
<dbReference type="GO" id="GO:0046872">
    <property type="term" value="F:metal ion binding"/>
    <property type="evidence" value="ECO:0007669"/>
    <property type="project" value="UniProtKB-KW"/>
</dbReference>
<dbReference type="GO" id="GO:0006281">
    <property type="term" value="P:DNA repair"/>
    <property type="evidence" value="ECO:0007669"/>
    <property type="project" value="UniProtKB-KW"/>
</dbReference>
<dbReference type="GO" id="GO:0006260">
    <property type="term" value="P:DNA replication"/>
    <property type="evidence" value="ECO:0007669"/>
    <property type="project" value="UniProtKB-KW"/>
</dbReference>
<dbReference type="CDD" id="cd17748">
    <property type="entry name" value="BRCT_DNA_ligase_like"/>
    <property type="match status" value="1"/>
</dbReference>
<dbReference type="CDD" id="cd00114">
    <property type="entry name" value="LIGANc"/>
    <property type="match status" value="1"/>
</dbReference>
<dbReference type="FunFam" id="1.10.150.20:FF:000006">
    <property type="entry name" value="DNA ligase"/>
    <property type="match status" value="1"/>
</dbReference>
<dbReference type="FunFam" id="1.10.287.610:FF:000002">
    <property type="entry name" value="DNA ligase"/>
    <property type="match status" value="1"/>
</dbReference>
<dbReference type="FunFam" id="2.40.50.140:FF:000012">
    <property type="entry name" value="DNA ligase"/>
    <property type="match status" value="1"/>
</dbReference>
<dbReference type="FunFam" id="3.30.470.30:FF:000001">
    <property type="entry name" value="DNA ligase"/>
    <property type="match status" value="1"/>
</dbReference>
<dbReference type="FunFam" id="3.40.50.10190:FF:000054">
    <property type="entry name" value="DNA ligase"/>
    <property type="match status" value="1"/>
</dbReference>
<dbReference type="Gene3D" id="6.20.10.30">
    <property type="match status" value="1"/>
</dbReference>
<dbReference type="Gene3D" id="1.10.150.20">
    <property type="entry name" value="5' to 3' exonuclease, C-terminal subdomain"/>
    <property type="match status" value="2"/>
</dbReference>
<dbReference type="Gene3D" id="3.40.50.10190">
    <property type="entry name" value="BRCT domain"/>
    <property type="match status" value="1"/>
</dbReference>
<dbReference type="Gene3D" id="3.30.470.30">
    <property type="entry name" value="DNA ligase/mRNA capping enzyme"/>
    <property type="match status" value="1"/>
</dbReference>
<dbReference type="Gene3D" id="1.10.287.610">
    <property type="entry name" value="Helix hairpin bin"/>
    <property type="match status" value="1"/>
</dbReference>
<dbReference type="Gene3D" id="2.40.50.140">
    <property type="entry name" value="Nucleic acid-binding proteins"/>
    <property type="match status" value="1"/>
</dbReference>
<dbReference type="HAMAP" id="MF_01588">
    <property type="entry name" value="DNA_ligase_A"/>
    <property type="match status" value="1"/>
</dbReference>
<dbReference type="InterPro" id="IPR001357">
    <property type="entry name" value="BRCT_dom"/>
</dbReference>
<dbReference type="InterPro" id="IPR036420">
    <property type="entry name" value="BRCT_dom_sf"/>
</dbReference>
<dbReference type="InterPro" id="IPR041663">
    <property type="entry name" value="DisA/LigA_HHH"/>
</dbReference>
<dbReference type="InterPro" id="IPR001679">
    <property type="entry name" value="DNA_ligase"/>
</dbReference>
<dbReference type="InterPro" id="IPR018239">
    <property type="entry name" value="DNA_ligase_AS"/>
</dbReference>
<dbReference type="InterPro" id="IPR033136">
    <property type="entry name" value="DNA_ligase_CS"/>
</dbReference>
<dbReference type="InterPro" id="IPR013839">
    <property type="entry name" value="DNAligase_adenylation"/>
</dbReference>
<dbReference type="InterPro" id="IPR013840">
    <property type="entry name" value="DNAligase_N"/>
</dbReference>
<dbReference type="InterPro" id="IPR003583">
    <property type="entry name" value="Hlx-hairpin-Hlx_DNA-bd_motif"/>
</dbReference>
<dbReference type="InterPro" id="IPR012340">
    <property type="entry name" value="NA-bd_OB-fold"/>
</dbReference>
<dbReference type="InterPro" id="IPR004150">
    <property type="entry name" value="NAD_DNA_ligase_OB"/>
</dbReference>
<dbReference type="InterPro" id="IPR010994">
    <property type="entry name" value="RuvA_2-like"/>
</dbReference>
<dbReference type="InterPro" id="IPR004149">
    <property type="entry name" value="Znf_DNAligase_C4"/>
</dbReference>
<dbReference type="NCBIfam" id="TIGR00575">
    <property type="entry name" value="dnlj"/>
    <property type="match status" value="1"/>
</dbReference>
<dbReference type="NCBIfam" id="NF005932">
    <property type="entry name" value="PRK07956.1"/>
    <property type="match status" value="1"/>
</dbReference>
<dbReference type="PANTHER" id="PTHR23389">
    <property type="entry name" value="CHROMOSOME TRANSMISSION FIDELITY FACTOR 18"/>
    <property type="match status" value="1"/>
</dbReference>
<dbReference type="PANTHER" id="PTHR23389:SF9">
    <property type="entry name" value="DNA LIGASE"/>
    <property type="match status" value="1"/>
</dbReference>
<dbReference type="Pfam" id="PF00533">
    <property type="entry name" value="BRCT"/>
    <property type="match status" value="1"/>
</dbReference>
<dbReference type="Pfam" id="PF01653">
    <property type="entry name" value="DNA_ligase_aden"/>
    <property type="match status" value="1"/>
</dbReference>
<dbReference type="Pfam" id="PF03120">
    <property type="entry name" value="DNA_ligase_OB"/>
    <property type="match status" value="1"/>
</dbReference>
<dbReference type="Pfam" id="PF03119">
    <property type="entry name" value="DNA_ligase_ZBD"/>
    <property type="match status" value="1"/>
</dbReference>
<dbReference type="Pfam" id="PF12826">
    <property type="entry name" value="HHH_2"/>
    <property type="match status" value="1"/>
</dbReference>
<dbReference type="PIRSF" id="PIRSF001604">
    <property type="entry name" value="LigA"/>
    <property type="match status" value="1"/>
</dbReference>
<dbReference type="SMART" id="SM00292">
    <property type="entry name" value="BRCT"/>
    <property type="match status" value="1"/>
</dbReference>
<dbReference type="SMART" id="SM00278">
    <property type="entry name" value="HhH1"/>
    <property type="match status" value="3"/>
</dbReference>
<dbReference type="SMART" id="SM00532">
    <property type="entry name" value="LIGANc"/>
    <property type="match status" value="1"/>
</dbReference>
<dbReference type="SUPFAM" id="SSF52113">
    <property type="entry name" value="BRCT domain"/>
    <property type="match status" value="1"/>
</dbReference>
<dbReference type="SUPFAM" id="SSF56091">
    <property type="entry name" value="DNA ligase/mRNA capping enzyme, catalytic domain"/>
    <property type="match status" value="1"/>
</dbReference>
<dbReference type="SUPFAM" id="SSF50249">
    <property type="entry name" value="Nucleic acid-binding proteins"/>
    <property type="match status" value="1"/>
</dbReference>
<dbReference type="SUPFAM" id="SSF47781">
    <property type="entry name" value="RuvA domain 2-like"/>
    <property type="match status" value="1"/>
</dbReference>
<dbReference type="PROSITE" id="PS50172">
    <property type="entry name" value="BRCT"/>
    <property type="match status" value="1"/>
</dbReference>
<dbReference type="PROSITE" id="PS01055">
    <property type="entry name" value="DNA_LIGASE_N1"/>
    <property type="match status" value="1"/>
</dbReference>
<dbReference type="PROSITE" id="PS01056">
    <property type="entry name" value="DNA_LIGASE_N2"/>
    <property type="match status" value="1"/>
</dbReference>
<name>DNLJ_RALPJ</name>
<evidence type="ECO:0000255" key="1">
    <source>
        <dbReference type="HAMAP-Rule" id="MF_01588"/>
    </source>
</evidence>
<feature type="chain" id="PRO_0000380450" description="DNA ligase">
    <location>
        <begin position="1"/>
        <end position="817"/>
    </location>
</feature>
<feature type="domain" description="BRCT" evidence="1">
    <location>
        <begin position="733"/>
        <end position="817"/>
    </location>
</feature>
<feature type="active site" description="N6-AMP-lysine intermediate" evidence="1">
    <location>
        <position position="133"/>
    </location>
</feature>
<feature type="binding site" evidence="1">
    <location>
        <begin position="45"/>
        <end position="49"/>
    </location>
    <ligand>
        <name>NAD(+)</name>
        <dbReference type="ChEBI" id="CHEBI:57540"/>
    </ligand>
</feature>
<feature type="binding site" evidence="1">
    <location>
        <begin position="94"/>
        <end position="95"/>
    </location>
    <ligand>
        <name>NAD(+)</name>
        <dbReference type="ChEBI" id="CHEBI:57540"/>
    </ligand>
</feature>
<feature type="binding site" evidence="1">
    <location>
        <position position="131"/>
    </location>
    <ligand>
        <name>NAD(+)</name>
        <dbReference type="ChEBI" id="CHEBI:57540"/>
    </ligand>
</feature>
<feature type="binding site" evidence="1">
    <location>
        <position position="154"/>
    </location>
    <ligand>
        <name>NAD(+)</name>
        <dbReference type="ChEBI" id="CHEBI:57540"/>
    </ligand>
</feature>
<feature type="binding site" evidence="1">
    <location>
        <position position="193"/>
    </location>
    <ligand>
        <name>NAD(+)</name>
        <dbReference type="ChEBI" id="CHEBI:57540"/>
    </ligand>
</feature>
<feature type="binding site" evidence="1">
    <location>
        <position position="311"/>
    </location>
    <ligand>
        <name>NAD(+)</name>
        <dbReference type="ChEBI" id="CHEBI:57540"/>
    </ligand>
</feature>
<feature type="binding site" evidence="1">
    <location>
        <position position="335"/>
    </location>
    <ligand>
        <name>NAD(+)</name>
        <dbReference type="ChEBI" id="CHEBI:57540"/>
    </ligand>
</feature>
<feature type="binding site" evidence="1">
    <location>
        <position position="444"/>
    </location>
    <ligand>
        <name>Zn(2+)</name>
        <dbReference type="ChEBI" id="CHEBI:29105"/>
    </ligand>
</feature>
<feature type="binding site" evidence="1">
    <location>
        <position position="447"/>
    </location>
    <ligand>
        <name>Zn(2+)</name>
        <dbReference type="ChEBI" id="CHEBI:29105"/>
    </ligand>
</feature>
<feature type="binding site" evidence="1">
    <location>
        <position position="462"/>
    </location>
    <ligand>
        <name>Zn(2+)</name>
        <dbReference type="ChEBI" id="CHEBI:29105"/>
    </ligand>
</feature>
<feature type="binding site" evidence="1">
    <location>
        <position position="468"/>
    </location>
    <ligand>
        <name>Zn(2+)</name>
        <dbReference type="ChEBI" id="CHEBI:29105"/>
    </ligand>
</feature>